<reference key="1">
    <citation type="journal article" date="2010" name="J. Bacteriol.">
        <title>The genetic basis of laboratory adaptation in Caulobacter crescentus.</title>
        <authorList>
            <person name="Marks M.E."/>
            <person name="Castro-Rojas C.M."/>
            <person name="Teiling C."/>
            <person name="Du L."/>
            <person name="Kapatral V."/>
            <person name="Walunas T.L."/>
            <person name="Crosson S."/>
        </authorList>
    </citation>
    <scope>NUCLEOTIDE SEQUENCE [LARGE SCALE GENOMIC DNA]</scope>
    <source>
        <strain>NA1000 / CB15N</strain>
    </source>
</reference>
<name>HIS2_CAUVN</name>
<gene>
    <name evidence="1" type="primary">hisE</name>
    <name type="ordered locus">CCNA_03854</name>
</gene>
<proteinExistence type="inferred from homology"/>
<sequence>MSQRLTDVLQRLAATIEARKGGDPSVSYTAKLLNDPALAAKKLGEEAVETVIAAVAQGSDALAAESADLLYHWLALMAASGVSLDAVAEKLEAREGTSGIAEKASRA</sequence>
<accession>B8GW16</accession>
<evidence type="ECO:0000255" key="1">
    <source>
        <dbReference type="HAMAP-Rule" id="MF_01020"/>
    </source>
</evidence>
<dbReference type="EC" id="3.6.1.31" evidence="1"/>
<dbReference type="EMBL" id="CP001340">
    <property type="protein sequence ID" value="ACL97319.1"/>
    <property type="molecule type" value="Genomic_DNA"/>
</dbReference>
<dbReference type="RefSeq" id="WP_010921565.1">
    <property type="nucleotide sequence ID" value="NC_011916.1"/>
</dbReference>
<dbReference type="RefSeq" id="YP_002519227.1">
    <property type="nucleotide sequence ID" value="NC_011916.1"/>
</dbReference>
<dbReference type="SMR" id="B8GW16"/>
<dbReference type="GeneID" id="7332702"/>
<dbReference type="KEGG" id="ccs:CCNA_03854"/>
<dbReference type="PATRIC" id="fig|565050.3.peg.3759"/>
<dbReference type="HOGENOM" id="CLU_123337_1_1_5"/>
<dbReference type="OrthoDB" id="9814738at2"/>
<dbReference type="PhylomeDB" id="B8GW16"/>
<dbReference type="UniPathway" id="UPA00031">
    <property type="reaction ID" value="UER00007"/>
</dbReference>
<dbReference type="Proteomes" id="UP000001364">
    <property type="component" value="Chromosome"/>
</dbReference>
<dbReference type="GO" id="GO:0005737">
    <property type="term" value="C:cytoplasm"/>
    <property type="evidence" value="ECO:0007669"/>
    <property type="project" value="UniProtKB-SubCell"/>
</dbReference>
<dbReference type="GO" id="GO:0005524">
    <property type="term" value="F:ATP binding"/>
    <property type="evidence" value="ECO:0007669"/>
    <property type="project" value="UniProtKB-KW"/>
</dbReference>
<dbReference type="GO" id="GO:0004636">
    <property type="term" value="F:phosphoribosyl-ATP diphosphatase activity"/>
    <property type="evidence" value="ECO:0007669"/>
    <property type="project" value="UniProtKB-UniRule"/>
</dbReference>
<dbReference type="GO" id="GO:0000105">
    <property type="term" value="P:L-histidine biosynthetic process"/>
    <property type="evidence" value="ECO:0007669"/>
    <property type="project" value="UniProtKB-UniRule"/>
</dbReference>
<dbReference type="CDD" id="cd11534">
    <property type="entry name" value="NTP-PPase_HisIE_like"/>
    <property type="match status" value="1"/>
</dbReference>
<dbReference type="Gene3D" id="1.10.287.1080">
    <property type="entry name" value="MazG-like"/>
    <property type="match status" value="1"/>
</dbReference>
<dbReference type="HAMAP" id="MF_01020">
    <property type="entry name" value="HisE"/>
    <property type="match status" value="1"/>
</dbReference>
<dbReference type="InterPro" id="IPR008179">
    <property type="entry name" value="HisE"/>
</dbReference>
<dbReference type="InterPro" id="IPR021130">
    <property type="entry name" value="PRib-ATP_PPHydrolase-like"/>
</dbReference>
<dbReference type="NCBIfam" id="TIGR03188">
    <property type="entry name" value="histidine_hisI"/>
    <property type="match status" value="1"/>
</dbReference>
<dbReference type="NCBIfam" id="NF001613">
    <property type="entry name" value="PRK00400.1-5"/>
    <property type="match status" value="1"/>
</dbReference>
<dbReference type="PANTHER" id="PTHR42945">
    <property type="entry name" value="HISTIDINE BIOSYNTHESIS BIFUNCTIONAL PROTEIN"/>
    <property type="match status" value="1"/>
</dbReference>
<dbReference type="PANTHER" id="PTHR42945:SF1">
    <property type="entry name" value="HISTIDINE BIOSYNTHESIS BIFUNCTIONAL PROTEIN HIS7"/>
    <property type="match status" value="1"/>
</dbReference>
<dbReference type="Pfam" id="PF01503">
    <property type="entry name" value="PRA-PH"/>
    <property type="match status" value="1"/>
</dbReference>
<dbReference type="SUPFAM" id="SSF101386">
    <property type="entry name" value="all-alpha NTP pyrophosphatases"/>
    <property type="match status" value="1"/>
</dbReference>
<comment type="catalytic activity">
    <reaction evidence="1">
        <text>1-(5-phospho-beta-D-ribosyl)-ATP + H2O = 1-(5-phospho-beta-D-ribosyl)-5'-AMP + diphosphate + H(+)</text>
        <dbReference type="Rhea" id="RHEA:22828"/>
        <dbReference type="ChEBI" id="CHEBI:15377"/>
        <dbReference type="ChEBI" id="CHEBI:15378"/>
        <dbReference type="ChEBI" id="CHEBI:33019"/>
        <dbReference type="ChEBI" id="CHEBI:59457"/>
        <dbReference type="ChEBI" id="CHEBI:73183"/>
        <dbReference type="EC" id="3.6.1.31"/>
    </reaction>
</comment>
<comment type="pathway">
    <text evidence="1">Amino-acid biosynthesis; L-histidine biosynthesis; L-histidine from 5-phospho-alpha-D-ribose 1-diphosphate: step 2/9.</text>
</comment>
<comment type="subcellular location">
    <subcellularLocation>
        <location evidence="1">Cytoplasm</location>
    </subcellularLocation>
</comment>
<comment type="similarity">
    <text evidence="1">Belongs to the PRA-PH family.</text>
</comment>
<feature type="chain" id="PRO_1000149050" description="Phosphoribosyl-ATP pyrophosphatase">
    <location>
        <begin position="1"/>
        <end position="107"/>
    </location>
</feature>
<organism>
    <name type="scientific">Caulobacter vibrioides (strain NA1000 / CB15N)</name>
    <name type="common">Caulobacter crescentus</name>
    <dbReference type="NCBI Taxonomy" id="565050"/>
    <lineage>
        <taxon>Bacteria</taxon>
        <taxon>Pseudomonadati</taxon>
        <taxon>Pseudomonadota</taxon>
        <taxon>Alphaproteobacteria</taxon>
        <taxon>Caulobacterales</taxon>
        <taxon>Caulobacteraceae</taxon>
        <taxon>Caulobacter</taxon>
    </lineage>
</organism>
<keyword id="KW-0028">Amino-acid biosynthesis</keyword>
<keyword id="KW-0067">ATP-binding</keyword>
<keyword id="KW-0963">Cytoplasm</keyword>
<keyword id="KW-0368">Histidine biosynthesis</keyword>
<keyword id="KW-0378">Hydrolase</keyword>
<keyword id="KW-0547">Nucleotide-binding</keyword>
<keyword id="KW-1185">Reference proteome</keyword>
<protein>
    <recommendedName>
        <fullName evidence="1">Phosphoribosyl-ATP pyrophosphatase</fullName>
        <shortName evidence="1">PRA-PH</shortName>
        <ecNumber evidence="1">3.6.1.31</ecNumber>
    </recommendedName>
</protein>